<sequence length="220" mass="24236">MKAVCVISGGMDSSTAAFIAKEQGYEILALHFDYNQRTMKKERECFNLICDDLGVKSREILDVSFIAQIGANSLTDKNLTIQKTGVKSGEIPNTYVPFRNGIFLSVAAAFAEKEGADALFIGVVEEDSSGYPDCSENFIKKIESAINAGTSPNFKLEIKIPLVHLSKTQIVKKALEIGVPLEHTWSCYEREDKACGFCDSCRLRLKGFKGADTKDTIPYI</sequence>
<gene>
    <name evidence="1" type="primary">queC</name>
    <name type="ordered locus">CHAB381_0744</name>
</gene>
<proteinExistence type="inferred from homology"/>
<organism>
    <name type="scientific">Campylobacter hominis (strain ATCC BAA-381 / DSM 21671 / CCUG 45161 / LMG 19568 / NCTC 13146 / CH001A)</name>
    <dbReference type="NCBI Taxonomy" id="360107"/>
    <lineage>
        <taxon>Bacteria</taxon>
        <taxon>Pseudomonadati</taxon>
        <taxon>Campylobacterota</taxon>
        <taxon>Epsilonproteobacteria</taxon>
        <taxon>Campylobacterales</taxon>
        <taxon>Campylobacteraceae</taxon>
        <taxon>Campylobacter</taxon>
    </lineage>
</organism>
<protein>
    <recommendedName>
        <fullName evidence="1">7-cyano-7-deazaguanine synthase</fullName>
        <ecNumber evidence="1">6.3.4.20</ecNumber>
    </recommendedName>
    <alternativeName>
        <fullName evidence="1">7-cyano-7-carbaguanine synthase</fullName>
    </alternativeName>
    <alternativeName>
        <fullName evidence="1">PreQ(0) synthase</fullName>
    </alternativeName>
    <alternativeName>
        <fullName evidence="1">Queuosine biosynthesis protein QueC</fullName>
    </alternativeName>
</protein>
<reference key="1">
    <citation type="submission" date="2007-07" db="EMBL/GenBank/DDBJ databases">
        <title>Complete genome sequence of Campylobacter hominis ATCC BAA-381, a commensal isolated from the human gastrointestinal tract.</title>
        <authorList>
            <person name="Fouts D.E."/>
            <person name="Mongodin E.F."/>
            <person name="Puiu D."/>
            <person name="Sebastian Y."/>
            <person name="Miller W.G."/>
            <person name="Mandrell R.E."/>
            <person name="Nelson K.E."/>
        </authorList>
    </citation>
    <scope>NUCLEOTIDE SEQUENCE [LARGE SCALE GENOMIC DNA]</scope>
    <source>
        <strain>ATCC BAA-381 / DSM 21671 / CCUG 45161 / LMG 19568 / NCTC 13146 / CH001A</strain>
    </source>
</reference>
<evidence type="ECO:0000255" key="1">
    <source>
        <dbReference type="HAMAP-Rule" id="MF_01633"/>
    </source>
</evidence>
<dbReference type="EC" id="6.3.4.20" evidence="1"/>
<dbReference type="EMBL" id="CP000776">
    <property type="protein sequence ID" value="ABS52375.1"/>
    <property type="molecule type" value="Genomic_DNA"/>
</dbReference>
<dbReference type="RefSeq" id="WP_012108609.1">
    <property type="nucleotide sequence ID" value="NC_009714.1"/>
</dbReference>
<dbReference type="SMR" id="A7I1D0"/>
<dbReference type="STRING" id="360107.CHAB381_0744"/>
<dbReference type="KEGG" id="cha:CHAB381_0744"/>
<dbReference type="eggNOG" id="COG0603">
    <property type="taxonomic scope" value="Bacteria"/>
</dbReference>
<dbReference type="HOGENOM" id="CLU_081854_1_0_7"/>
<dbReference type="OrthoDB" id="9789567at2"/>
<dbReference type="UniPathway" id="UPA00391"/>
<dbReference type="Proteomes" id="UP000002407">
    <property type="component" value="Chromosome"/>
</dbReference>
<dbReference type="GO" id="GO:0005524">
    <property type="term" value="F:ATP binding"/>
    <property type="evidence" value="ECO:0007669"/>
    <property type="project" value="UniProtKB-UniRule"/>
</dbReference>
<dbReference type="GO" id="GO:0016879">
    <property type="term" value="F:ligase activity, forming carbon-nitrogen bonds"/>
    <property type="evidence" value="ECO:0007669"/>
    <property type="project" value="UniProtKB-UniRule"/>
</dbReference>
<dbReference type="GO" id="GO:0008270">
    <property type="term" value="F:zinc ion binding"/>
    <property type="evidence" value="ECO:0007669"/>
    <property type="project" value="UniProtKB-UniRule"/>
</dbReference>
<dbReference type="GO" id="GO:0008616">
    <property type="term" value="P:queuosine biosynthetic process"/>
    <property type="evidence" value="ECO:0007669"/>
    <property type="project" value="UniProtKB-UniRule"/>
</dbReference>
<dbReference type="CDD" id="cd01995">
    <property type="entry name" value="QueC-like"/>
    <property type="match status" value="1"/>
</dbReference>
<dbReference type="Gene3D" id="3.40.50.620">
    <property type="entry name" value="HUPs"/>
    <property type="match status" value="1"/>
</dbReference>
<dbReference type="HAMAP" id="MF_01633">
    <property type="entry name" value="QueC"/>
    <property type="match status" value="1"/>
</dbReference>
<dbReference type="InterPro" id="IPR018317">
    <property type="entry name" value="QueC"/>
</dbReference>
<dbReference type="InterPro" id="IPR014729">
    <property type="entry name" value="Rossmann-like_a/b/a_fold"/>
</dbReference>
<dbReference type="NCBIfam" id="TIGR00364">
    <property type="entry name" value="7-cyano-7-deazaguanine synthase QueC"/>
    <property type="match status" value="1"/>
</dbReference>
<dbReference type="PANTHER" id="PTHR42914">
    <property type="entry name" value="7-CYANO-7-DEAZAGUANINE SYNTHASE"/>
    <property type="match status" value="1"/>
</dbReference>
<dbReference type="PANTHER" id="PTHR42914:SF1">
    <property type="entry name" value="7-CYANO-7-DEAZAGUANINE SYNTHASE"/>
    <property type="match status" value="1"/>
</dbReference>
<dbReference type="Pfam" id="PF06508">
    <property type="entry name" value="QueC"/>
    <property type="match status" value="1"/>
</dbReference>
<dbReference type="PIRSF" id="PIRSF006293">
    <property type="entry name" value="ExsB"/>
    <property type="match status" value="1"/>
</dbReference>
<dbReference type="SUPFAM" id="SSF52402">
    <property type="entry name" value="Adenine nucleotide alpha hydrolases-like"/>
    <property type="match status" value="1"/>
</dbReference>
<accession>A7I1D0</accession>
<comment type="function">
    <text evidence="1">Catalyzes the ATP-dependent conversion of 7-carboxy-7-deazaguanine (CDG) to 7-cyano-7-deazaguanine (preQ(0)).</text>
</comment>
<comment type="catalytic activity">
    <reaction evidence="1">
        <text>7-carboxy-7-deazaguanine + NH4(+) + ATP = 7-cyano-7-deazaguanine + ADP + phosphate + H2O + H(+)</text>
        <dbReference type="Rhea" id="RHEA:27982"/>
        <dbReference type="ChEBI" id="CHEBI:15377"/>
        <dbReference type="ChEBI" id="CHEBI:15378"/>
        <dbReference type="ChEBI" id="CHEBI:28938"/>
        <dbReference type="ChEBI" id="CHEBI:30616"/>
        <dbReference type="ChEBI" id="CHEBI:43474"/>
        <dbReference type="ChEBI" id="CHEBI:45075"/>
        <dbReference type="ChEBI" id="CHEBI:61036"/>
        <dbReference type="ChEBI" id="CHEBI:456216"/>
        <dbReference type="EC" id="6.3.4.20"/>
    </reaction>
</comment>
<comment type="cofactor">
    <cofactor evidence="1">
        <name>Zn(2+)</name>
        <dbReference type="ChEBI" id="CHEBI:29105"/>
    </cofactor>
    <text evidence="1">Binds 1 zinc ion per subunit.</text>
</comment>
<comment type="pathway">
    <text evidence="1">Purine metabolism; 7-cyano-7-deazaguanine biosynthesis.</text>
</comment>
<comment type="similarity">
    <text evidence="1">Belongs to the QueC family.</text>
</comment>
<keyword id="KW-0067">ATP-binding</keyword>
<keyword id="KW-0436">Ligase</keyword>
<keyword id="KW-0479">Metal-binding</keyword>
<keyword id="KW-0547">Nucleotide-binding</keyword>
<keyword id="KW-0671">Queuosine biosynthesis</keyword>
<keyword id="KW-1185">Reference proteome</keyword>
<keyword id="KW-0862">Zinc</keyword>
<feature type="chain" id="PRO_0000336902" description="7-cyano-7-deazaguanine synthase">
    <location>
        <begin position="1"/>
        <end position="220"/>
    </location>
</feature>
<feature type="binding site" evidence="1">
    <location>
        <begin position="7"/>
        <end position="17"/>
    </location>
    <ligand>
        <name>ATP</name>
        <dbReference type="ChEBI" id="CHEBI:30616"/>
    </ligand>
</feature>
<feature type="binding site" evidence="1">
    <location>
        <position position="187"/>
    </location>
    <ligand>
        <name>Zn(2+)</name>
        <dbReference type="ChEBI" id="CHEBI:29105"/>
    </ligand>
</feature>
<feature type="binding site" evidence="1">
    <location>
        <position position="195"/>
    </location>
    <ligand>
        <name>Zn(2+)</name>
        <dbReference type="ChEBI" id="CHEBI:29105"/>
    </ligand>
</feature>
<feature type="binding site" evidence="1">
    <location>
        <position position="198"/>
    </location>
    <ligand>
        <name>Zn(2+)</name>
        <dbReference type="ChEBI" id="CHEBI:29105"/>
    </ligand>
</feature>
<feature type="binding site" evidence="1">
    <location>
        <position position="201"/>
    </location>
    <ligand>
        <name>Zn(2+)</name>
        <dbReference type="ChEBI" id="CHEBI:29105"/>
    </ligand>
</feature>
<name>QUEC_CAMHC</name>